<reference key="1">
    <citation type="journal article" date="2005" name="Microbiology">
        <title>Daptomycin biosynthesis in Streptomyces roseosporus: cloning and analysis of the gene cluster and revision of peptide stereochemistry.</title>
        <authorList>
            <person name="Miao V."/>
            <person name="Coeffet-Legal M.F."/>
            <person name="Brian P."/>
            <person name="Brost R."/>
            <person name="Penn J."/>
            <person name="Whiting A."/>
            <person name="Martin S."/>
            <person name="Ford R."/>
            <person name="Parr I."/>
            <person name="Bouchard M."/>
            <person name="Silva C.J."/>
            <person name="Wrigley S.K."/>
            <person name="Baltz R.H."/>
        </authorList>
    </citation>
    <scope>NUCLEOTIDE SEQUENCE [GENOMIC DNA]</scope>
    <source>
        <strain>NRRL 11379</strain>
    </source>
</reference>
<proteinExistence type="inferred from homology"/>
<keyword id="KW-0326">Glycosidase</keyword>
<keyword id="KW-0378">Hydrolase</keyword>
<keyword id="KW-0520">NAD</keyword>
<keyword id="KW-0732">Signal</keyword>
<sequence>MNDDARPAPEPQDIPPHSGAADEVNRQDPSRRSVLWTTAGVAGAGLGLGALGAGTASAAGRSAPDAVAAAEAVAAAPPRQGRTMAGVPFERRSTVRVGIIGLGNRGDSMIDLFLALPGVQVKAVCDTVRDKAEKAAKKVTAAGQPAPAIYAKDEHDYENLCKRGDIDFVYVVTPWELHFPMAKTAMLNGKHVGVECPIAMRLEELWQLVDLSERTRRHCMQLENCCYGKNEMRVLRMAHAGLFGELQHGAGAYNHDLRELMFDPDYYEGPWRRLWHTRLRGDLYPNHGFGPVANYMDVNRGDRVVSISSVGTTPLGLAAYREEHMPAGDPSWKESYIGADRTISLVQTAKGRVIRLEHDVSSPHPYSRINSLGGTKGVFEDYPERIYLEPTNTNHQWDDFKKYAEWDHWLWKEHANPPGGHGGMDYIMVFRLMQCMRLGLVPDFDVYDAAVWTAPVPLSHLSIKAKGVPLPIPDFTRGEWKKTRSGMDSEKPAE</sequence>
<organism>
    <name type="scientific">Streptomyces filamentosus</name>
    <name type="common">Streptomyces roseosporus</name>
    <dbReference type="NCBI Taxonomy" id="67294"/>
    <lineage>
        <taxon>Bacteria</taxon>
        <taxon>Bacillati</taxon>
        <taxon>Actinomycetota</taxon>
        <taxon>Actinomycetes</taxon>
        <taxon>Kitasatosporales</taxon>
        <taxon>Streptomycetaceae</taxon>
        <taxon>Streptomyces</taxon>
    </lineage>
</organism>
<accession>Q50EA3</accession>
<evidence type="ECO:0000250" key="1"/>
<evidence type="ECO:0000255" key="2">
    <source>
        <dbReference type="PROSITE-ProRule" id="PRU00648"/>
    </source>
</evidence>
<evidence type="ECO:0000256" key="3">
    <source>
        <dbReference type="SAM" id="MobiDB-lite"/>
    </source>
</evidence>
<evidence type="ECO:0000305" key="4"/>
<protein>
    <recommendedName>
        <fullName>Glycosyl hydrolase family 109 protein</fullName>
        <ecNumber>3.2.1.-</ecNumber>
    </recommendedName>
</protein>
<dbReference type="EC" id="3.2.1.-"/>
<dbReference type="EMBL" id="AY787762">
    <property type="protein sequence ID" value="AAX31528.1"/>
    <property type="molecule type" value="Genomic_DNA"/>
</dbReference>
<dbReference type="RefSeq" id="WP_006122854.1">
    <property type="nucleotide sequence ID" value="NZ_CP098609.1"/>
</dbReference>
<dbReference type="SMR" id="Q50EA3"/>
<dbReference type="GO" id="GO:0016798">
    <property type="term" value="F:hydrolase activity, acting on glycosyl bonds"/>
    <property type="evidence" value="ECO:0007669"/>
    <property type="project" value="UniProtKB-KW"/>
</dbReference>
<dbReference type="GO" id="GO:0000166">
    <property type="term" value="F:nucleotide binding"/>
    <property type="evidence" value="ECO:0007669"/>
    <property type="project" value="InterPro"/>
</dbReference>
<dbReference type="Gene3D" id="3.30.360.10">
    <property type="entry name" value="Dihydrodipicolinate Reductase, domain 2"/>
    <property type="match status" value="1"/>
</dbReference>
<dbReference type="Gene3D" id="3.40.50.720">
    <property type="entry name" value="NAD(P)-binding Rossmann-like Domain"/>
    <property type="match status" value="1"/>
</dbReference>
<dbReference type="InterPro" id="IPR000683">
    <property type="entry name" value="Gfo/Idh/MocA-like_OxRdtase_N"/>
</dbReference>
<dbReference type="InterPro" id="IPR050463">
    <property type="entry name" value="Gfo/Idh/MocA_oxidrdct_glycsds"/>
</dbReference>
<dbReference type="InterPro" id="IPR049303">
    <property type="entry name" value="Glyco_hydro_109_C"/>
</dbReference>
<dbReference type="InterPro" id="IPR036291">
    <property type="entry name" value="NAD(P)-bd_dom_sf"/>
</dbReference>
<dbReference type="InterPro" id="IPR006311">
    <property type="entry name" value="TAT_signal"/>
</dbReference>
<dbReference type="PANTHER" id="PTHR43818">
    <property type="entry name" value="BCDNA.GH03377"/>
    <property type="match status" value="1"/>
</dbReference>
<dbReference type="PANTHER" id="PTHR43818:SF1">
    <property type="entry name" value="GLYCOSYL HYDROLASE FAMILY 109 PROTEIN"/>
    <property type="match status" value="1"/>
</dbReference>
<dbReference type="Pfam" id="PF01408">
    <property type="entry name" value="GFO_IDH_MocA"/>
    <property type="match status" value="1"/>
</dbReference>
<dbReference type="Pfam" id="PF21252">
    <property type="entry name" value="Glyco_hydro_109_C"/>
    <property type="match status" value="1"/>
</dbReference>
<dbReference type="SUPFAM" id="SSF51735">
    <property type="entry name" value="NAD(P)-binding Rossmann-fold domains"/>
    <property type="match status" value="1"/>
</dbReference>
<dbReference type="PROSITE" id="PS51318">
    <property type="entry name" value="TAT"/>
    <property type="match status" value="1"/>
</dbReference>
<name>GH109_STRFL</name>
<comment type="function">
    <text evidence="1">Glycosidase.</text>
</comment>
<comment type="cofactor">
    <cofactor evidence="1">
        <name>NAD(+)</name>
        <dbReference type="ChEBI" id="CHEBI:57540"/>
    </cofactor>
    <text evidence="1">Binds 1 NAD(+) per subunit. The NAD(+) cannot dissociate.</text>
</comment>
<comment type="PTM">
    <text>Predicted to be exported by the Tat system. The position of the signal peptide cleavage has not been experimentally proven.</text>
</comment>
<comment type="similarity">
    <text evidence="4">Belongs to the Gfo/Idh/MocA family. Glycosyl hydrolase 109 subfamily.</text>
</comment>
<feature type="signal peptide" description="Tat-type signal" evidence="2">
    <location>
        <begin position="1"/>
        <end position="58"/>
    </location>
</feature>
<feature type="chain" id="PRO_0000348566" description="Glycosyl hydrolase family 109 protein">
    <location>
        <begin position="59"/>
        <end position="494"/>
    </location>
</feature>
<feature type="region of interest" description="Disordered" evidence="3">
    <location>
        <begin position="1"/>
        <end position="32"/>
    </location>
</feature>
<feature type="binding site" evidence="1">
    <location>
        <begin position="104"/>
        <end position="105"/>
    </location>
    <ligand>
        <name>NAD(+)</name>
        <dbReference type="ChEBI" id="CHEBI:57540"/>
    </ligand>
</feature>
<feature type="binding site" evidence="1">
    <location>
        <position position="126"/>
    </location>
    <ligand>
        <name>NAD(+)</name>
        <dbReference type="ChEBI" id="CHEBI:57540"/>
    </ligand>
</feature>
<feature type="binding site" evidence="1">
    <location>
        <begin position="175"/>
        <end position="178"/>
    </location>
    <ligand>
        <name>NAD(+)</name>
        <dbReference type="ChEBI" id="CHEBI:57540"/>
    </ligand>
</feature>
<feature type="binding site" evidence="1">
    <location>
        <begin position="195"/>
        <end position="196"/>
    </location>
    <ligand>
        <name>NAD(+)</name>
        <dbReference type="ChEBI" id="CHEBI:57540"/>
    </ligand>
</feature>
<feature type="binding site" evidence="1">
    <location>
        <position position="224"/>
    </location>
    <ligand>
        <name>NAD(+)</name>
        <dbReference type="ChEBI" id="CHEBI:57540"/>
    </ligand>
</feature>
<feature type="binding site" evidence="1">
    <location>
        <position position="253"/>
    </location>
    <ligand>
        <name>substrate</name>
    </ligand>
</feature>
<feature type="binding site" evidence="1">
    <location>
        <position position="272"/>
    </location>
    <ligand>
        <name>substrate</name>
    </ligand>
</feature>
<feature type="binding site" evidence="1">
    <location>
        <begin position="284"/>
        <end position="287"/>
    </location>
    <ligand>
        <name>substrate</name>
    </ligand>
</feature>
<feature type="binding site" evidence="1">
    <location>
        <position position="284"/>
    </location>
    <ligand>
        <name>NAD(+)</name>
        <dbReference type="ChEBI" id="CHEBI:57540"/>
    </ligand>
</feature>
<feature type="binding site" evidence="1">
    <location>
        <position position="366"/>
    </location>
    <ligand>
        <name>substrate</name>
    </ligand>
</feature>